<name>PETL_CUCSA</name>
<gene>
    <name evidence="1" type="primary">petL</name>
    <name type="ordered locus">CsCp058</name>
</gene>
<reference key="1">
    <citation type="journal article" date="2006" name="Plant Cell Rep.">
        <title>Complete sequence and organization of the cucumber (Cucumis sativus L. cv. Baekmibaekdadagi) chloroplast genome.</title>
        <authorList>
            <person name="Kim J.-S."/>
            <person name="Jung J.D."/>
            <person name="Lee J.-A."/>
            <person name="Park H.-W."/>
            <person name="Oh K.-H."/>
            <person name="Jeong W.J."/>
            <person name="Choi D.-W."/>
            <person name="Liu J.R."/>
            <person name="Cho K.Y."/>
        </authorList>
    </citation>
    <scope>NUCLEOTIDE SEQUENCE [LARGE SCALE GENOMIC DNA]</scope>
    <source>
        <strain>cv. Baekmibaekdadagi</strain>
    </source>
</reference>
<reference key="2">
    <citation type="journal article" date="2007" name="Cell. Mol. Biol. Lett.">
        <title>The complete structure of the cucumber (Cucumis sativus L.) chloroplast genome: its composition and comparative analysis.</title>
        <authorList>
            <person name="Plader W.W."/>
            <person name="Yukawa Y."/>
            <person name="Sugiura M."/>
            <person name="Malepszy S."/>
        </authorList>
    </citation>
    <scope>NUCLEOTIDE SEQUENCE [LARGE SCALE GENOMIC DNA]</scope>
    <source>
        <strain>cv. Borszczagowski</strain>
    </source>
</reference>
<reference key="3">
    <citation type="journal article" date="2007" name="Genome">
        <title>Sequencing cucumber (Cucumis sativus L.) chloroplast genomes identifies differences between chilling-tolerant and -susceptible cucumber lines.</title>
        <authorList>
            <person name="Chung S.-M."/>
            <person name="Gordon V.S."/>
            <person name="Staub J.E."/>
        </authorList>
    </citation>
    <scope>NUCLEOTIDE SEQUENCE [LARGE SCALE GENOMIC DNA]</scope>
    <source>
        <strain>cv. Chipper</strain>
        <strain>cv. Gy14</strain>
    </source>
</reference>
<proteinExistence type="inferred from homology"/>
<geneLocation type="chloroplast"/>
<organism>
    <name type="scientific">Cucumis sativus</name>
    <name type="common">Cucumber</name>
    <dbReference type="NCBI Taxonomy" id="3659"/>
    <lineage>
        <taxon>Eukaryota</taxon>
        <taxon>Viridiplantae</taxon>
        <taxon>Streptophyta</taxon>
        <taxon>Embryophyta</taxon>
        <taxon>Tracheophyta</taxon>
        <taxon>Spermatophyta</taxon>
        <taxon>Magnoliopsida</taxon>
        <taxon>eudicotyledons</taxon>
        <taxon>Gunneridae</taxon>
        <taxon>Pentapetalae</taxon>
        <taxon>rosids</taxon>
        <taxon>fabids</taxon>
        <taxon>Cucurbitales</taxon>
        <taxon>Cucurbitaceae</taxon>
        <taxon>Benincaseae</taxon>
        <taxon>Cucumis</taxon>
    </lineage>
</organism>
<evidence type="ECO:0000255" key="1">
    <source>
        <dbReference type="HAMAP-Rule" id="MF_00433"/>
    </source>
</evidence>
<feature type="chain" id="PRO_0000233671" description="Cytochrome b6-f complex subunit 6">
    <location>
        <begin position="1"/>
        <end position="31"/>
    </location>
</feature>
<feature type="transmembrane region" description="Helical" evidence="1">
    <location>
        <begin position="4"/>
        <end position="24"/>
    </location>
</feature>
<comment type="function">
    <text evidence="1">Component of the cytochrome b6-f complex, which mediates electron transfer between photosystem II (PSII) and photosystem I (PSI), cyclic electron flow around PSI, and state transitions. PetL is important for photoautotrophic growth as well as for electron transfer efficiency and stability of the cytochrome b6-f complex.</text>
</comment>
<comment type="subunit">
    <text evidence="1">The 4 large subunits of the cytochrome b6-f complex are cytochrome b6, subunit IV (17 kDa polypeptide, PetD), cytochrome f and the Rieske protein, while the 4 small subunits are PetG, PetL, PetM and PetN. The complex functions as a dimer.</text>
</comment>
<comment type="subcellular location">
    <subcellularLocation>
        <location evidence="1">Plastid</location>
        <location evidence="1">Chloroplast thylakoid membrane</location>
        <topology evidence="1">Single-pass membrane protein</topology>
    </subcellularLocation>
</comment>
<comment type="similarity">
    <text evidence="1">Belongs to the PetL family.</text>
</comment>
<keyword id="KW-0150">Chloroplast</keyword>
<keyword id="KW-0249">Electron transport</keyword>
<keyword id="KW-0472">Membrane</keyword>
<keyword id="KW-0602">Photosynthesis</keyword>
<keyword id="KW-0934">Plastid</keyword>
<keyword id="KW-0793">Thylakoid</keyword>
<keyword id="KW-0812">Transmembrane</keyword>
<keyword id="KW-1133">Transmembrane helix</keyword>
<keyword id="KW-0813">Transport</keyword>
<protein>
    <recommendedName>
        <fullName evidence="1">Cytochrome b6-f complex subunit 6</fullName>
    </recommendedName>
    <alternativeName>
        <fullName evidence="1">Cytochrome b6-f complex subunit PetL</fullName>
    </alternativeName>
    <alternativeName>
        <fullName evidence="1">Cytochrome b6-f complex subunit VI</fullName>
    </alternativeName>
</protein>
<sequence length="31" mass="3444">MLTITSYFGFLLAVLTITSALFIGLNKIRLI</sequence>
<accession>Q4VZJ9</accession>
<accession>A5J1V2</accession>
<dbReference type="EMBL" id="DQ119058">
    <property type="protein sequence ID" value="AAZ94669.1"/>
    <property type="molecule type" value="Genomic_DNA"/>
</dbReference>
<dbReference type="EMBL" id="AJ970307">
    <property type="protein sequence ID" value="CAJ00776.1"/>
    <property type="molecule type" value="Genomic_DNA"/>
</dbReference>
<dbReference type="EMBL" id="DQ865975">
    <property type="protein sequence ID" value="ABI97435.1"/>
    <property type="molecule type" value="Genomic_DNA"/>
</dbReference>
<dbReference type="EMBL" id="DQ865976">
    <property type="protein sequence ID" value="ABI98763.1"/>
    <property type="molecule type" value="Genomic_DNA"/>
</dbReference>
<dbReference type="RefSeq" id="YP_247617.1">
    <property type="nucleotide sequence ID" value="NC_007144.1"/>
</dbReference>
<dbReference type="SMR" id="Q4VZJ9"/>
<dbReference type="GeneID" id="3429269"/>
<dbReference type="KEGG" id="csv:3429269"/>
<dbReference type="OrthoDB" id="738066at2759"/>
<dbReference type="GO" id="GO:0009535">
    <property type="term" value="C:chloroplast thylakoid membrane"/>
    <property type="evidence" value="ECO:0007669"/>
    <property type="project" value="UniProtKB-SubCell"/>
</dbReference>
<dbReference type="GO" id="GO:0009512">
    <property type="term" value="C:cytochrome b6f complex"/>
    <property type="evidence" value="ECO:0007669"/>
    <property type="project" value="InterPro"/>
</dbReference>
<dbReference type="GO" id="GO:0045158">
    <property type="term" value="F:electron transporter, transferring electrons within cytochrome b6/f complex of photosystem II activity"/>
    <property type="evidence" value="ECO:0007669"/>
    <property type="project" value="UniProtKB-UniRule"/>
</dbReference>
<dbReference type="GO" id="GO:0015979">
    <property type="term" value="P:photosynthesis"/>
    <property type="evidence" value="ECO:0007669"/>
    <property type="project" value="UniProtKB-KW"/>
</dbReference>
<dbReference type="HAMAP" id="MF_00433">
    <property type="entry name" value="Cytb6_f_PetL"/>
    <property type="match status" value="1"/>
</dbReference>
<dbReference type="InterPro" id="IPR007802">
    <property type="entry name" value="Cyt_b6/f_cplx_su6"/>
</dbReference>
<dbReference type="PANTHER" id="PTHR37266">
    <property type="entry name" value="CYTOCHROME B6-F COMPLEX SUBUNIT 6"/>
    <property type="match status" value="1"/>
</dbReference>
<dbReference type="PANTHER" id="PTHR37266:SF1">
    <property type="entry name" value="CYTOCHROME B6-F COMPLEX SUBUNIT 6"/>
    <property type="match status" value="1"/>
</dbReference>
<dbReference type="Pfam" id="PF05115">
    <property type="entry name" value="PetL"/>
    <property type="match status" value="1"/>
</dbReference>
<dbReference type="SUPFAM" id="SSF103436">
    <property type="entry name" value="PetL subunit of the cytochrome b6f complex"/>
    <property type="match status" value="1"/>
</dbReference>